<gene>
    <name type="primary">norM</name>
    <name type="ordered locus">bll0821</name>
</gene>
<protein>
    <recommendedName>
        <fullName>Probable multidrug resistance protein NorM</fullName>
    </recommendedName>
    <alternativeName>
        <fullName>Multidrug-efflux transporter</fullName>
    </alternativeName>
</protein>
<sequence>MTMLDTVQHHSQPQSGVPQNHLADEFVETLRLAVPMMLTQLGQIAMITTDLALIGRLGEDAVAAAALAHTVYFVSFTFGLGLMAAVSPLVAQAFGAGDVRRIRRALRVGLWVALLISLPMMASPLYGEHILIALGQVPQSAALAQRYLNGLAWGIAPALGFIALRGMMSAVNRPQPPLWITVAAIPVNAALVYVLIHGLFGLPELGLFGAGLATTLVNLGTFLAVLAIAAWRKPFSDYRPLAHLWRIDWPLVRQLIALGAPISSSLLLEYGLFSSAALLMGLISTTALAAHQIALQVTAVLFMVPLGIGMAATVRVGHAFGRNDPAAVRRAGLVAAVLGVALVSALTVAIILGRYELGRLFFGGSEASAATVELTATLLLVGATFFIADGLQTIMGGALRGINDTRMTLAFAAIGYWCVAFPVAWVLAFHTGLGAVGVWIGFSIGTFVYAGLLVLRFRMLARRLVG</sequence>
<keyword id="KW-0050">Antiport</keyword>
<keyword id="KW-0997">Cell inner membrane</keyword>
<keyword id="KW-1003">Cell membrane</keyword>
<keyword id="KW-0406">Ion transport</keyword>
<keyword id="KW-0472">Membrane</keyword>
<keyword id="KW-1185">Reference proteome</keyword>
<keyword id="KW-0812">Transmembrane</keyword>
<keyword id="KW-1133">Transmembrane helix</keyword>
<keyword id="KW-0813">Transport</keyword>
<feature type="chain" id="PRO_0000164207" description="Probable multidrug resistance protein NorM">
    <location>
        <begin position="1"/>
        <end position="466"/>
    </location>
</feature>
<feature type="transmembrane region" description="Helical" evidence="2">
    <location>
        <begin position="68"/>
        <end position="90"/>
    </location>
</feature>
<feature type="transmembrane region" description="Helical" evidence="2">
    <location>
        <begin position="110"/>
        <end position="132"/>
    </location>
</feature>
<feature type="transmembrane region" description="Helical" evidence="2">
    <location>
        <begin position="142"/>
        <end position="164"/>
    </location>
</feature>
<feature type="transmembrane region" description="Helical" evidence="2">
    <location>
        <begin position="177"/>
        <end position="199"/>
    </location>
</feature>
<feature type="transmembrane region" description="Helical" evidence="2">
    <location>
        <begin position="209"/>
        <end position="231"/>
    </location>
</feature>
<feature type="transmembrane region" description="Helical" evidence="2">
    <location>
        <begin position="251"/>
        <end position="273"/>
    </location>
</feature>
<feature type="transmembrane region" description="Helical" evidence="2">
    <location>
        <begin position="288"/>
        <end position="310"/>
    </location>
</feature>
<feature type="transmembrane region" description="Helical" evidence="2">
    <location>
        <begin position="331"/>
        <end position="353"/>
    </location>
</feature>
<feature type="transmembrane region" description="Helical" evidence="2">
    <location>
        <begin position="368"/>
        <end position="387"/>
    </location>
</feature>
<feature type="transmembrane region" description="Helical" evidence="2">
    <location>
        <begin position="407"/>
        <end position="429"/>
    </location>
</feature>
<feature type="transmembrane region" description="Helical" evidence="2">
    <location>
        <begin position="433"/>
        <end position="455"/>
    </location>
</feature>
<proteinExistence type="inferred from homology"/>
<reference key="1">
    <citation type="journal article" date="2002" name="DNA Res.">
        <title>Complete genomic sequence of nitrogen-fixing symbiotic bacterium Bradyrhizobium japonicum USDA110.</title>
        <authorList>
            <person name="Kaneko T."/>
            <person name="Nakamura Y."/>
            <person name="Sato S."/>
            <person name="Minamisawa K."/>
            <person name="Uchiumi T."/>
            <person name="Sasamoto S."/>
            <person name="Watanabe A."/>
            <person name="Idesawa K."/>
            <person name="Iriguchi M."/>
            <person name="Kawashima K."/>
            <person name="Kohara M."/>
            <person name="Matsumoto M."/>
            <person name="Shimpo S."/>
            <person name="Tsuruoka H."/>
            <person name="Wada T."/>
            <person name="Yamada M."/>
            <person name="Tabata S."/>
        </authorList>
    </citation>
    <scope>NUCLEOTIDE SEQUENCE [LARGE SCALE GENOMIC DNA]</scope>
    <source>
        <strain>JCM 10833 / BCRC 13528 / IAM 13628 / NBRC 14792 / USDA 110</strain>
    </source>
</reference>
<accession>Q89W72</accession>
<comment type="function">
    <text evidence="1">Multidrug efflux pump.</text>
</comment>
<comment type="subcellular location">
    <subcellularLocation>
        <location evidence="1">Cell inner membrane</location>
        <topology evidence="1">Multi-pass membrane protein</topology>
    </subcellularLocation>
</comment>
<comment type="similarity">
    <text evidence="3">Belongs to the multi antimicrobial extrusion (MATE) (TC 2.A.66.1) family.</text>
</comment>
<organism>
    <name type="scientific">Bradyrhizobium diazoefficiens (strain JCM 10833 / BCRC 13528 / IAM 13628 / NBRC 14792 / USDA 110)</name>
    <dbReference type="NCBI Taxonomy" id="224911"/>
    <lineage>
        <taxon>Bacteria</taxon>
        <taxon>Pseudomonadati</taxon>
        <taxon>Pseudomonadota</taxon>
        <taxon>Alphaproteobacteria</taxon>
        <taxon>Hyphomicrobiales</taxon>
        <taxon>Nitrobacteraceae</taxon>
        <taxon>Bradyrhizobium</taxon>
    </lineage>
</organism>
<name>NORM_BRADU</name>
<evidence type="ECO:0000250" key="1"/>
<evidence type="ECO:0000255" key="2"/>
<evidence type="ECO:0000305" key="3"/>
<dbReference type="EMBL" id="BA000040">
    <property type="protein sequence ID" value="BAC46086.1"/>
    <property type="molecule type" value="Genomic_DNA"/>
</dbReference>
<dbReference type="RefSeq" id="NP_767461.1">
    <property type="nucleotide sequence ID" value="NC_004463.1"/>
</dbReference>
<dbReference type="SMR" id="Q89W72"/>
<dbReference type="FunCoup" id="Q89W72">
    <property type="interactions" value="322"/>
</dbReference>
<dbReference type="STRING" id="224911.AAV28_00945"/>
<dbReference type="EnsemblBacteria" id="BAC46086">
    <property type="protein sequence ID" value="BAC46086"/>
    <property type="gene ID" value="BAC46086"/>
</dbReference>
<dbReference type="KEGG" id="bja:bll0821"/>
<dbReference type="PATRIC" id="fig|224911.5.peg.844"/>
<dbReference type="eggNOG" id="COG0534">
    <property type="taxonomic scope" value="Bacteria"/>
</dbReference>
<dbReference type="HOGENOM" id="CLU_012893_6_3_5"/>
<dbReference type="InParanoid" id="Q89W72"/>
<dbReference type="OrthoDB" id="9780160at2"/>
<dbReference type="PhylomeDB" id="Q89W72"/>
<dbReference type="Proteomes" id="UP000002526">
    <property type="component" value="Chromosome"/>
</dbReference>
<dbReference type="GO" id="GO:0016020">
    <property type="term" value="C:membrane"/>
    <property type="evidence" value="ECO:0000318"/>
    <property type="project" value="GO_Central"/>
</dbReference>
<dbReference type="GO" id="GO:0005886">
    <property type="term" value="C:plasma membrane"/>
    <property type="evidence" value="ECO:0007669"/>
    <property type="project" value="UniProtKB-SubCell"/>
</dbReference>
<dbReference type="GO" id="GO:0015297">
    <property type="term" value="F:antiporter activity"/>
    <property type="evidence" value="ECO:0007669"/>
    <property type="project" value="UniProtKB-KW"/>
</dbReference>
<dbReference type="GO" id="GO:0022857">
    <property type="term" value="F:transmembrane transporter activity"/>
    <property type="evidence" value="ECO:0000318"/>
    <property type="project" value="GO_Central"/>
</dbReference>
<dbReference type="GO" id="GO:0042910">
    <property type="term" value="F:xenobiotic transmembrane transporter activity"/>
    <property type="evidence" value="ECO:0007669"/>
    <property type="project" value="InterPro"/>
</dbReference>
<dbReference type="GO" id="GO:0006811">
    <property type="term" value="P:monoatomic ion transport"/>
    <property type="evidence" value="ECO:0007669"/>
    <property type="project" value="UniProtKB-KW"/>
</dbReference>
<dbReference type="CDD" id="cd13131">
    <property type="entry name" value="MATE_NorM_like"/>
    <property type="match status" value="1"/>
</dbReference>
<dbReference type="InterPro" id="IPR002528">
    <property type="entry name" value="MATE_fam"/>
</dbReference>
<dbReference type="InterPro" id="IPR050222">
    <property type="entry name" value="MATE_MdtK"/>
</dbReference>
<dbReference type="InterPro" id="IPR048279">
    <property type="entry name" value="MdtK-like"/>
</dbReference>
<dbReference type="NCBIfam" id="TIGR00797">
    <property type="entry name" value="matE"/>
    <property type="match status" value="1"/>
</dbReference>
<dbReference type="PANTHER" id="PTHR43298:SF2">
    <property type="entry name" value="FMN_FAD EXPORTER YEEO-RELATED"/>
    <property type="match status" value="1"/>
</dbReference>
<dbReference type="PANTHER" id="PTHR43298">
    <property type="entry name" value="MULTIDRUG RESISTANCE PROTEIN NORM-RELATED"/>
    <property type="match status" value="1"/>
</dbReference>
<dbReference type="Pfam" id="PF01554">
    <property type="entry name" value="MatE"/>
    <property type="match status" value="2"/>
</dbReference>
<dbReference type="PIRSF" id="PIRSF006603">
    <property type="entry name" value="DinF"/>
    <property type="match status" value="1"/>
</dbReference>